<name>ILVC_PROMS</name>
<organism>
    <name type="scientific">Prochlorococcus marinus (strain AS9601)</name>
    <dbReference type="NCBI Taxonomy" id="146891"/>
    <lineage>
        <taxon>Bacteria</taxon>
        <taxon>Bacillati</taxon>
        <taxon>Cyanobacteriota</taxon>
        <taxon>Cyanophyceae</taxon>
        <taxon>Synechococcales</taxon>
        <taxon>Prochlorococcaceae</taxon>
        <taxon>Prochlorococcus</taxon>
    </lineage>
</organism>
<keyword id="KW-0028">Amino-acid biosynthesis</keyword>
<keyword id="KW-0100">Branched-chain amino acid biosynthesis</keyword>
<keyword id="KW-0460">Magnesium</keyword>
<keyword id="KW-0479">Metal-binding</keyword>
<keyword id="KW-0521">NADP</keyword>
<keyword id="KW-0560">Oxidoreductase</keyword>
<protein>
    <recommendedName>
        <fullName evidence="1">Ketol-acid reductoisomerase (NADP(+))</fullName>
        <shortName evidence="1">KARI</shortName>
        <ecNumber evidence="1">1.1.1.86</ecNumber>
    </recommendedName>
    <alternativeName>
        <fullName evidence="1">Acetohydroxy-acid isomeroreductase</fullName>
        <shortName evidence="1">AHIR</shortName>
    </alternativeName>
    <alternativeName>
        <fullName evidence="1">Alpha-keto-beta-hydroxylacyl reductoisomerase</fullName>
    </alternativeName>
    <alternativeName>
        <fullName evidence="1">Ketol-acid reductoisomerase type 1</fullName>
    </alternativeName>
    <alternativeName>
        <fullName evidence="1">Ketol-acid reductoisomerase type I</fullName>
    </alternativeName>
</protein>
<sequence length="329" mass="36401">MTQLFYDTDADLSLLNNKTIAIIGYGSQGHAHALNLKDSGMDVIVGLYKGSKSESKAISDGLQVFSVSEACEKADWIMILLPDEFQKDVYLKEIEPNLKEGKILSFAHGFNIRFGLIKPPSFVDVVMIAPKGPGHTVRWEYQNGQGVPALFAVEQDSSGNARSLAMAYAKGIGGTRAGILETNFKEETETDLFGEQAVLCGGLSELVKSGFETLVEAGYQPELAYFECLHEVKLIVDLMVKGGLSQMRDSISNTAEYGDYVSGKRLINSDTKKEMQKILKDIQDGTFAKNFVEECDKNKPLMTKLREENSKHEIEKVGKGLRSMFSWLK</sequence>
<gene>
    <name evidence="1" type="primary">ilvC</name>
    <name type="ordered locus">A9601_15141</name>
</gene>
<reference key="1">
    <citation type="journal article" date="2007" name="PLoS Genet.">
        <title>Patterns and implications of gene gain and loss in the evolution of Prochlorococcus.</title>
        <authorList>
            <person name="Kettler G.C."/>
            <person name="Martiny A.C."/>
            <person name="Huang K."/>
            <person name="Zucker J."/>
            <person name="Coleman M.L."/>
            <person name="Rodrigue S."/>
            <person name="Chen F."/>
            <person name="Lapidus A."/>
            <person name="Ferriera S."/>
            <person name="Johnson J."/>
            <person name="Steglich C."/>
            <person name="Church G.M."/>
            <person name="Richardson P."/>
            <person name="Chisholm S.W."/>
        </authorList>
    </citation>
    <scope>NUCLEOTIDE SEQUENCE [LARGE SCALE GENOMIC DNA]</scope>
    <source>
        <strain>AS9601</strain>
    </source>
</reference>
<accession>A2BSN6</accession>
<feature type="chain" id="PRO_1000050557" description="Ketol-acid reductoisomerase (NADP(+))">
    <location>
        <begin position="1"/>
        <end position="329"/>
    </location>
</feature>
<feature type="domain" description="KARI N-terminal Rossmann" evidence="2">
    <location>
        <begin position="2"/>
        <end position="182"/>
    </location>
</feature>
<feature type="domain" description="KARI C-terminal knotted" evidence="3">
    <location>
        <begin position="183"/>
        <end position="328"/>
    </location>
</feature>
<feature type="active site" evidence="1">
    <location>
        <position position="108"/>
    </location>
</feature>
<feature type="binding site" evidence="1">
    <location>
        <begin position="25"/>
        <end position="28"/>
    </location>
    <ligand>
        <name>NADP(+)</name>
        <dbReference type="ChEBI" id="CHEBI:58349"/>
    </ligand>
</feature>
<feature type="binding site" evidence="1">
    <location>
        <position position="51"/>
    </location>
    <ligand>
        <name>NADP(+)</name>
        <dbReference type="ChEBI" id="CHEBI:58349"/>
    </ligand>
</feature>
<feature type="binding site" evidence="1">
    <location>
        <position position="53"/>
    </location>
    <ligand>
        <name>NADP(+)</name>
        <dbReference type="ChEBI" id="CHEBI:58349"/>
    </ligand>
</feature>
<feature type="binding site" evidence="1">
    <location>
        <begin position="83"/>
        <end position="86"/>
    </location>
    <ligand>
        <name>NADP(+)</name>
        <dbReference type="ChEBI" id="CHEBI:58349"/>
    </ligand>
</feature>
<feature type="binding site" evidence="1">
    <location>
        <position position="134"/>
    </location>
    <ligand>
        <name>NADP(+)</name>
        <dbReference type="ChEBI" id="CHEBI:58349"/>
    </ligand>
</feature>
<feature type="binding site" evidence="1">
    <location>
        <position position="191"/>
    </location>
    <ligand>
        <name>Mg(2+)</name>
        <dbReference type="ChEBI" id="CHEBI:18420"/>
        <label>1</label>
    </ligand>
</feature>
<feature type="binding site" evidence="1">
    <location>
        <position position="191"/>
    </location>
    <ligand>
        <name>Mg(2+)</name>
        <dbReference type="ChEBI" id="CHEBI:18420"/>
        <label>2</label>
    </ligand>
</feature>
<feature type="binding site" evidence="1">
    <location>
        <position position="195"/>
    </location>
    <ligand>
        <name>Mg(2+)</name>
        <dbReference type="ChEBI" id="CHEBI:18420"/>
        <label>1</label>
    </ligand>
</feature>
<feature type="binding site" evidence="1">
    <location>
        <position position="227"/>
    </location>
    <ligand>
        <name>Mg(2+)</name>
        <dbReference type="ChEBI" id="CHEBI:18420"/>
        <label>2</label>
    </ligand>
</feature>
<feature type="binding site" evidence="1">
    <location>
        <position position="231"/>
    </location>
    <ligand>
        <name>Mg(2+)</name>
        <dbReference type="ChEBI" id="CHEBI:18420"/>
        <label>2</label>
    </ligand>
</feature>
<feature type="binding site" evidence="1">
    <location>
        <position position="252"/>
    </location>
    <ligand>
        <name>substrate</name>
    </ligand>
</feature>
<comment type="function">
    <text evidence="1">Involved in the biosynthesis of branched-chain amino acids (BCAA). Catalyzes an alkyl-migration followed by a ketol-acid reduction of (S)-2-acetolactate (S2AL) to yield (R)-2,3-dihydroxy-isovalerate. In the isomerase reaction, S2AL is rearranged via a Mg-dependent methyl migration to produce 3-hydroxy-3-methyl-2-ketobutyrate (HMKB). In the reductase reaction, this 2-ketoacid undergoes a metal-dependent reduction by NADPH to yield (R)-2,3-dihydroxy-isovalerate.</text>
</comment>
<comment type="catalytic activity">
    <reaction evidence="1">
        <text>(2R)-2,3-dihydroxy-3-methylbutanoate + NADP(+) = (2S)-2-acetolactate + NADPH + H(+)</text>
        <dbReference type="Rhea" id="RHEA:22068"/>
        <dbReference type="ChEBI" id="CHEBI:15378"/>
        <dbReference type="ChEBI" id="CHEBI:49072"/>
        <dbReference type="ChEBI" id="CHEBI:57783"/>
        <dbReference type="ChEBI" id="CHEBI:58349"/>
        <dbReference type="ChEBI" id="CHEBI:58476"/>
        <dbReference type="EC" id="1.1.1.86"/>
    </reaction>
</comment>
<comment type="catalytic activity">
    <reaction evidence="1">
        <text>(2R,3R)-2,3-dihydroxy-3-methylpentanoate + NADP(+) = (S)-2-ethyl-2-hydroxy-3-oxobutanoate + NADPH + H(+)</text>
        <dbReference type="Rhea" id="RHEA:13493"/>
        <dbReference type="ChEBI" id="CHEBI:15378"/>
        <dbReference type="ChEBI" id="CHEBI:49256"/>
        <dbReference type="ChEBI" id="CHEBI:49258"/>
        <dbReference type="ChEBI" id="CHEBI:57783"/>
        <dbReference type="ChEBI" id="CHEBI:58349"/>
        <dbReference type="EC" id="1.1.1.86"/>
    </reaction>
</comment>
<comment type="cofactor">
    <cofactor evidence="1">
        <name>Mg(2+)</name>
        <dbReference type="ChEBI" id="CHEBI:18420"/>
    </cofactor>
    <text evidence="1">Binds 2 magnesium ions per subunit.</text>
</comment>
<comment type="pathway">
    <text evidence="1">Amino-acid biosynthesis; L-isoleucine biosynthesis; L-isoleucine from 2-oxobutanoate: step 2/4.</text>
</comment>
<comment type="pathway">
    <text evidence="1">Amino-acid biosynthesis; L-valine biosynthesis; L-valine from pyruvate: step 2/4.</text>
</comment>
<comment type="similarity">
    <text evidence="1">Belongs to the ketol-acid reductoisomerase family.</text>
</comment>
<evidence type="ECO:0000255" key="1">
    <source>
        <dbReference type="HAMAP-Rule" id="MF_00435"/>
    </source>
</evidence>
<evidence type="ECO:0000255" key="2">
    <source>
        <dbReference type="PROSITE-ProRule" id="PRU01197"/>
    </source>
</evidence>
<evidence type="ECO:0000255" key="3">
    <source>
        <dbReference type="PROSITE-ProRule" id="PRU01198"/>
    </source>
</evidence>
<dbReference type="EC" id="1.1.1.86" evidence="1"/>
<dbReference type="EMBL" id="CP000551">
    <property type="protein sequence ID" value="ABM70797.1"/>
    <property type="molecule type" value="Genomic_DNA"/>
</dbReference>
<dbReference type="RefSeq" id="WP_011818931.1">
    <property type="nucleotide sequence ID" value="NC_008816.1"/>
</dbReference>
<dbReference type="SMR" id="A2BSN6"/>
<dbReference type="STRING" id="146891.A9601_15141"/>
<dbReference type="KEGG" id="pmb:A9601_15141"/>
<dbReference type="eggNOG" id="COG0059">
    <property type="taxonomic scope" value="Bacteria"/>
</dbReference>
<dbReference type="HOGENOM" id="CLU_033821_0_1_3"/>
<dbReference type="OrthoDB" id="9804088at2"/>
<dbReference type="UniPathway" id="UPA00047">
    <property type="reaction ID" value="UER00056"/>
</dbReference>
<dbReference type="UniPathway" id="UPA00049">
    <property type="reaction ID" value="UER00060"/>
</dbReference>
<dbReference type="Proteomes" id="UP000002590">
    <property type="component" value="Chromosome"/>
</dbReference>
<dbReference type="GO" id="GO:0005829">
    <property type="term" value="C:cytosol"/>
    <property type="evidence" value="ECO:0007669"/>
    <property type="project" value="TreeGrafter"/>
</dbReference>
<dbReference type="GO" id="GO:0004455">
    <property type="term" value="F:ketol-acid reductoisomerase activity"/>
    <property type="evidence" value="ECO:0007669"/>
    <property type="project" value="UniProtKB-UniRule"/>
</dbReference>
<dbReference type="GO" id="GO:0000287">
    <property type="term" value="F:magnesium ion binding"/>
    <property type="evidence" value="ECO:0007669"/>
    <property type="project" value="UniProtKB-UniRule"/>
</dbReference>
<dbReference type="GO" id="GO:0050661">
    <property type="term" value="F:NADP binding"/>
    <property type="evidence" value="ECO:0007669"/>
    <property type="project" value="InterPro"/>
</dbReference>
<dbReference type="GO" id="GO:0009097">
    <property type="term" value="P:isoleucine biosynthetic process"/>
    <property type="evidence" value="ECO:0007669"/>
    <property type="project" value="UniProtKB-UniRule"/>
</dbReference>
<dbReference type="GO" id="GO:0009099">
    <property type="term" value="P:L-valine biosynthetic process"/>
    <property type="evidence" value="ECO:0007669"/>
    <property type="project" value="UniProtKB-UniRule"/>
</dbReference>
<dbReference type="FunFam" id="3.40.50.720:FF:000023">
    <property type="entry name" value="Ketol-acid reductoisomerase (NADP(+))"/>
    <property type="match status" value="1"/>
</dbReference>
<dbReference type="Gene3D" id="6.10.240.10">
    <property type="match status" value="1"/>
</dbReference>
<dbReference type="Gene3D" id="3.40.50.720">
    <property type="entry name" value="NAD(P)-binding Rossmann-like Domain"/>
    <property type="match status" value="1"/>
</dbReference>
<dbReference type="HAMAP" id="MF_00435">
    <property type="entry name" value="IlvC"/>
    <property type="match status" value="1"/>
</dbReference>
<dbReference type="InterPro" id="IPR008927">
    <property type="entry name" value="6-PGluconate_DH-like_C_sf"/>
</dbReference>
<dbReference type="InterPro" id="IPR013023">
    <property type="entry name" value="KARI"/>
</dbReference>
<dbReference type="InterPro" id="IPR000506">
    <property type="entry name" value="KARI_C"/>
</dbReference>
<dbReference type="InterPro" id="IPR013116">
    <property type="entry name" value="KARI_N"/>
</dbReference>
<dbReference type="InterPro" id="IPR014359">
    <property type="entry name" value="KARI_prok"/>
</dbReference>
<dbReference type="InterPro" id="IPR036291">
    <property type="entry name" value="NAD(P)-bd_dom_sf"/>
</dbReference>
<dbReference type="NCBIfam" id="TIGR00465">
    <property type="entry name" value="ilvC"/>
    <property type="match status" value="1"/>
</dbReference>
<dbReference type="NCBIfam" id="NF004017">
    <property type="entry name" value="PRK05479.1"/>
    <property type="match status" value="1"/>
</dbReference>
<dbReference type="NCBIfam" id="NF009940">
    <property type="entry name" value="PRK13403.1"/>
    <property type="match status" value="1"/>
</dbReference>
<dbReference type="PANTHER" id="PTHR21371">
    <property type="entry name" value="KETOL-ACID REDUCTOISOMERASE, MITOCHONDRIAL"/>
    <property type="match status" value="1"/>
</dbReference>
<dbReference type="PANTHER" id="PTHR21371:SF1">
    <property type="entry name" value="KETOL-ACID REDUCTOISOMERASE, MITOCHONDRIAL"/>
    <property type="match status" value="1"/>
</dbReference>
<dbReference type="Pfam" id="PF01450">
    <property type="entry name" value="KARI_C"/>
    <property type="match status" value="1"/>
</dbReference>
<dbReference type="Pfam" id="PF07991">
    <property type="entry name" value="KARI_N"/>
    <property type="match status" value="1"/>
</dbReference>
<dbReference type="PIRSF" id="PIRSF000116">
    <property type="entry name" value="IlvC_gammaproteo"/>
    <property type="match status" value="1"/>
</dbReference>
<dbReference type="SUPFAM" id="SSF48179">
    <property type="entry name" value="6-phosphogluconate dehydrogenase C-terminal domain-like"/>
    <property type="match status" value="1"/>
</dbReference>
<dbReference type="SUPFAM" id="SSF51735">
    <property type="entry name" value="NAD(P)-binding Rossmann-fold domains"/>
    <property type="match status" value="1"/>
</dbReference>
<dbReference type="PROSITE" id="PS51851">
    <property type="entry name" value="KARI_C"/>
    <property type="match status" value="1"/>
</dbReference>
<dbReference type="PROSITE" id="PS51850">
    <property type="entry name" value="KARI_N"/>
    <property type="match status" value="1"/>
</dbReference>
<proteinExistence type="inferred from homology"/>